<name>AROQ_BACC7</name>
<reference key="1">
    <citation type="submission" date="2008-10" db="EMBL/GenBank/DDBJ databases">
        <title>Genome sequence of Bacillus cereus AH187.</title>
        <authorList>
            <person name="Dodson R.J."/>
            <person name="Durkin A.S."/>
            <person name="Rosovitz M.J."/>
            <person name="Rasko D.A."/>
            <person name="Kolsto A.B."/>
            <person name="Okstad O.A."/>
            <person name="Ravel J."/>
            <person name="Sutton G."/>
        </authorList>
    </citation>
    <scope>NUCLEOTIDE SEQUENCE [LARGE SCALE GENOMIC DNA]</scope>
    <source>
        <strain>AH187</strain>
    </source>
</reference>
<evidence type="ECO:0000255" key="1">
    <source>
        <dbReference type="HAMAP-Rule" id="MF_00169"/>
    </source>
</evidence>
<keyword id="KW-0028">Amino-acid biosynthesis</keyword>
<keyword id="KW-0057">Aromatic amino acid biosynthesis</keyword>
<keyword id="KW-0456">Lyase</keyword>
<comment type="function">
    <text evidence="1">Catalyzes a trans-dehydration via an enolate intermediate.</text>
</comment>
<comment type="catalytic activity">
    <reaction evidence="1">
        <text>3-dehydroquinate = 3-dehydroshikimate + H2O</text>
        <dbReference type="Rhea" id="RHEA:21096"/>
        <dbReference type="ChEBI" id="CHEBI:15377"/>
        <dbReference type="ChEBI" id="CHEBI:16630"/>
        <dbReference type="ChEBI" id="CHEBI:32364"/>
        <dbReference type="EC" id="4.2.1.10"/>
    </reaction>
</comment>
<comment type="pathway">
    <text evidence="1">Metabolic intermediate biosynthesis; chorismate biosynthesis; chorismate from D-erythrose 4-phosphate and phosphoenolpyruvate: step 3/7.</text>
</comment>
<comment type="subunit">
    <text evidence="1">Homododecamer.</text>
</comment>
<comment type="similarity">
    <text evidence="1">Belongs to the type-II 3-dehydroquinase family.</text>
</comment>
<sequence length="146" mass="16195">MKKVLLVNGPNLNRLGVREVNVYGKGTLATLEADMKQEAETMGVELECFQSNHEGAIIDRIHEAEDIYEGIILNPGAFTHYSYAIRDAIASISIPVIEVHISNIHQRESFRHESVTAAVCAGQIVGFGFYGYKLALFALMEKLREA</sequence>
<feature type="chain" id="PRO_1000118275" description="3-dehydroquinate dehydratase">
    <location>
        <begin position="1"/>
        <end position="146"/>
    </location>
</feature>
<feature type="active site" description="Proton acceptor" evidence="1">
    <location>
        <position position="23"/>
    </location>
</feature>
<feature type="active site" description="Proton donor" evidence="1">
    <location>
        <position position="100"/>
    </location>
</feature>
<feature type="binding site" evidence="1">
    <location>
        <position position="74"/>
    </location>
    <ligand>
        <name>substrate</name>
    </ligand>
</feature>
<feature type="binding site" evidence="1">
    <location>
        <position position="80"/>
    </location>
    <ligand>
        <name>substrate</name>
    </ligand>
</feature>
<feature type="binding site" evidence="1">
    <location>
        <position position="87"/>
    </location>
    <ligand>
        <name>substrate</name>
    </ligand>
</feature>
<feature type="binding site" evidence="1">
    <location>
        <begin position="101"/>
        <end position="102"/>
    </location>
    <ligand>
        <name>substrate</name>
    </ligand>
</feature>
<feature type="binding site" evidence="1">
    <location>
        <position position="111"/>
    </location>
    <ligand>
        <name>substrate</name>
    </ligand>
</feature>
<feature type="site" description="Transition state stabilizer" evidence="1">
    <location>
        <position position="18"/>
    </location>
</feature>
<gene>
    <name evidence="1" type="primary">aroQ</name>
    <name type="ordered locus">BCAH187_A4329</name>
</gene>
<dbReference type="EC" id="4.2.1.10" evidence="1"/>
<dbReference type="EMBL" id="CP001177">
    <property type="protein sequence ID" value="ACJ80719.1"/>
    <property type="molecule type" value="Genomic_DNA"/>
</dbReference>
<dbReference type="SMR" id="B7HNW2"/>
<dbReference type="KEGG" id="bcr:BCAH187_A4329"/>
<dbReference type="HOGENOM" id="CLU_090968_3_0_9"/>
<dbReference type="UniPathway" id="UPA00053">
    <property type="reaction ID" value="UER00086"/>
</dbReference>
<dbReference type="Proteomes" id="UP000002214">
    <property type="component" value="Chromosome"/>
</dbReference>
<dbReference type="GO" id="GO:0003855">
    <property type="term" value="F:3-dehydroquinate dehydratase activity"/>
    <property type="evidence" value="ECO:0007669"/>
    <property type="project" value="UniProtKB-UniRule"/>
</dbReference>
<dbReference type="GO" id="GO:0008652">
    <property type="term" value="P:amino acid biosynthetic process"/>
    <property type="evidence" value="ECO:0007669"/>
    <property type="project" value="UniProtKB-KW"/>
</dbReference>
<dbReference type="GO" id="GO:0009073">
    <property type="term" value="P:aromatic amino acid family biosynthetic process"/>
    <property type="evidence" value="ECO:0007669"/>
    <property type="project" value="UniProtKB-KW"/>
</dbReference>
<dbReference type="GO" id="GO:0009423">
    <property type="term" value="P:chorismate biosynthetic process"/>
    <property type="evidence" value="ECO:0007669"/>
    <property type="project" value="UniProtKB-UniRule"/>
</dbReference>
<dbReference type="GO" id="GO:0019631">
    <property type="term" value="P:quinate catabolic process"/>
    <property type="evidence" value="ECO:0007669"/>
    <property type="project" value="TreeGrafter"/>
</dbReference>
<dbReference type="CDD" id="cd00466">
    <property type="entry name" value="DHQase_II"/>
    <property type="match status" value="1"/>
</dbReference>
<dbReference type="Gene3D" id="3.40.50.9100">
    <property type="entry name" value="Dehydroquinase, class II"/>
    <property type="match status" value="1"/>
</dbReference>
<dbReference type="HAMAP" id="MF_00169">
    <property type="entry name" value="AroQ"/>
    <property type="match status" value="1"/>
</dbReference>
<dbReference type="InterPro" id="IPR001874">
    <property type="entry name" value="DHquinase_II"/>
</dbReference>
<dbReference type="InterPro" id="IPR018509">
    <property type="entry name" value="DHquinase_II_CS"/>
</dbReference>
<dbReference type="InterPro" id="IPR036441">
    <property type="entry name" value="DHquinase_II_sf"/>
</dbReference>
<dbReference type="NCBIfam" id="TIGR01088">
    <property type="entry name" value="aroQ"/>
    <property type="match status" value="1"/>
</dbReference>
<dbReference type="NCBIfam" id="NF003805">
    <property type="entry name" value="PRK05395.1-2"/>
    <property type="match status" value="1"/>
</dbReference>
<dbReference type="NCBIfam" id="NF003806">
    <property type="entry name" value="PRK05395.1-3"/>
    <property type="match status" value="1"/>
</dbReference>
<dbReference type="NCBIfam" id="NF003807">
    <property type="entry name" value="PRK05395.1-4"/>
    <property type="match status" value="1"/>
</dbReference>
<dbReference type="PANTHER" id="PTHR21272">
    <property type="entry name" value="CATABOLIC 3-DEHYDROQUINASE"/>
    <property type="match status" value="1"/>
</dbReference>
<dbReference type="PANTHER" id="PTHR21272:SF3">
    <property type="entry name" value="CATABOLIC 3-DEHYDROQUINASE"/>
    <property type="match status" value="1"/>
</dbReference>
<dbReference type="Pfam" id="PF01220">
    <property type="entry name" value="DHquinase_II"/>
    <property type="match status" value="1"/>
</dbReference>
<dbReference type="PIRSF" id="PIRSF001399">
    <property type="entry name" value="DHquinase_II"/>
    <property type="match status" value="1"/>
</dbReference>
<dbReference type="SUPFAM" id="SSF52304">
    <property type="entry name" value="Type II 3-dehydroquinate dehydratase"/>
    <property type="match status" value="1"/>
</dbReference>
<dbReference type="PROSITE" id="PS01029">
    <property type="entry name" value="DEHYDROQUINASE_II"/>
    <property type="match status" value="1"/>
</dbReference>
<proteinExistence type="inferred from homology"/>
<organism>
    <name type="scientific">Bacillus cereus (strain AH187)</name>
    <dbReference type="NCBI Taxonomy" id="405534"/>
    <lineage>
        <taxon>Bacteria</taxon>
        <taxon>Bacillati</taxon>
        <taxon>Bacillota</taxon>
        <taxon>Bacilli</taxon>
        <taxon>Bacillales</taxon>
        <taxon>Bacillaceae</taxon>
        <taxon>Bacillus</taxon>
        <taxon>Bacillus cereus group</taxon>
    </lineage>
</organism>
<protein>
    <recommendedName>
        <fullName evidence="1">3-dehydroquinate dehydratase</fullName>
        <shortName evidence="1">3-dehydroquinase</shortName>
        <ecNumber evidence="1">4.2.1.10</ecNumber>
    </recommendedName>
    <alternativeName>
        <fullName evidence="1">Type II DHQase</fullName>
    </alternativeName>
</protein>
<accession>B7HNW2</accession>